<accession>A0AKV8</accession>
<protein>
    <recommendedName>
        <fullName evidence="1">2,3-bisphosphoglycerate-dependent phosphoglycerate mutase</fullName>
        <shortName evidence="1">BPG-dependent PGAM</shortName>
        <shortName evidence="1">PGAM</shortName>
        <shortName evidence="1">Phosphoglyceromutase</shortName>
        <shortName evidence="1">dPGM</shortName>
        <ecNumber evidence="1">5.4.2.11</ecNumber>
    </recommendedName>
</protein>
<keyword id="KW-0312">Gluconeogenesis</keyword>
<keyword id="KW-0324">Glycolysis</keyword>
<keyword id="KW-0413">Isomerase</keyword>
<gene>
    <name evidence="1" type="primary">gpmA</name>
    <name type="ordered locus">lwe2222</name>
</gene>
<reference key="1">
    <citation type="journal article" date="2006" name="J. Bacteriol.">
        <title>Whole-genome sequence of Listeria welshimeri reveals common steps in genome reduction with Listeria innocua as compared to Listeria monocytogenes.</title>
        <authorList>
            <person name="Hain T."/>
            <person name="Steinweg C."/>
            <person name="Kuenne C.T."/>
            <person name="Billion A."/>
            <person name="Ghai R."/>
            <person name="Chatterjee S.S."/>
            <person name="Domann E."/>
            <person name="Kaerst U."/>
            <person name="Goesmann A."/>
            <person name="Bekel T."/>
            <person name="Bartels D."/>
            <person name="Kaiser O."/>
            <person name="Meyer F."/>
            <person name="Puehler A."/>
            <person name="Weisshaar B."/>
            <person name="Wehland J."/>
            <person name="Liang C."/>
            <person name="Dandekar T."/>
            <person name="Lampidis R."/>
            <person name="Kreft J."/>
            <person name="Goebel W."/>
            <person name="Chakraborty T."/>
        </authorList>
    </citation>
    <scope>NUCLEOTIDE SEQUENCE [LARGE SCALE GENOMIC DNA]</scope>
    <source>
        <strain>ATCC 35897 / DSM 20650 / CCUG 15529 / CIP 8149 / NCTC 11857 / SLCC 5334 / V8</strain>
    </source>
</reference>
<sequence>MKLVLIRHGQSEWNKLNLFTGWHDVDLSEEGVVEAMTAGKRIKEAGLEFDVAFTSVLTRAIKTLNYVLEESDQMWVPVNKSWRLNERHYGALQGLNKQETAEKYGADQVQKWRRSYDTLPPLLEENDERQAKNDRRYQLLDTHAIPSGENLKVTLERVIPYWMDTIAPEIKEGRRVVIAAHGNSLRALVKFLEGISDDEIMELEIPTGVPLVYELNDDLKPVNKYYLDK</sequence>
<evidence type="ECO:0000255" key="1">
    <source>
        <dbReference type="HAMAP-Rule" id="MF_01039"/>
    </source>
</evidence>
<feature type="chain" id="PRO_1000064070" description="2,3-bisphosphoglycerate-dependent phosphoglycerate mutase">
    <location>
        <begin position="1"/>
        <end position="229"/>
    </location>
</feature>
<feature type="active site" description="Tele-phosphohistidine intermediate" evidence="1">
    <location>
        <position position="8"/>
    </location>
</feature>
<feature type="active site" description="Proton donor/acceptor" evidence="1">
    <location>
        <position position="86"/>
    </location>
</feature>
<feature type="binding site" evidence="1">
    <location>
        <begin position="7"/>
        <end position="14"/>
    </location>
    <ligand>
        <name>substrate</name>
    </ligand>
</feature>
<feature type="binding site" evidence="1">
    <location>
        <begin position="20"/>
        <end position="21"/>
    </location>
    <ligand>
        <name>substrate</name>
    </ligand>
</feature>
<feature type="binding site" evidence="1">
    <location>
        <position position="59"/>
    </location>
    <ligand>
        <name>substrate</name>
    </ligand>
</feature>
<feature type="binding site" evidence="1">
    <location>
        <begin position="86"/>
        <end position="89"/>
    </location>
    <ligand>
        <name>substrate</name>
    </ligand>
</feature>
<feature type="binding site" evidence="1">
    <location>
        <position position="97"/>
    </location>
    <ligand>
        <name>substrate</name>
    </ligand>
</feature>
<feature type="binding site" evidence="1">
    <location>
        <begin position="113"/>
        <end position="114"/>
    </location>
    <ligand>
        <name>substrate</name>
    </ligand>
</feature>
<feature type="binding site" evidence="1">
    <location>
        <begin position="182"/>
        <end position="183"/>
    </location>
    <ligand>
        <name>substrate</name>
    </ligand>
</feature>
<feature type="site" description="Transition state stabilizer" evidence="1">
    <location>
        <position position="181"/>
    </location>
</feature>
<proteinExistence type="inferred from homology"/>
<name>GPMA_LISW6</name>
<comment type="function">
    <text evidence="1">Catalyzes the interconversion of 2-phosphoglycerate and 3-phosphoglycerate.</text>
</comment>
<comment type="catalytic activity">
    <reaction evidence="1">
        <text>(2R)-2-phosphoglycerate = (2R)-3-phosphoglycerate</text>
        <dbReference type="Rhea" id="RHEA:15901"/>
        <dbReference type="ChEBI" id="CHEBI:58272"/>
        <dbReference type="ChEBI" id="CHEBI:58289"/>
        <dbReference type="EC" id="5.4.2.11"/>
    </reaction>
</comment>
<comment type="pathway">
    <text evidence="1">Carbohydrate degradation; glycolysis; pyruvate from D-glyceraldehyde 3-phosphate: step 3/5.</text>
</comment>
<comment type="similarity">
    <text evidence="1">Belongs to the phosphoglycerate mutase family. BPG-dependent PGAM subfamily.</text>
</comment>
<dbReference type="EC" id="5.4.2.11" evidence="1"/>
<dbReference type="EMBL" id="AM263198">
    <property type="protein sequence ID" value="CAK21640.1"/>
    <property type="molecule type" value="Genomic_DNA"/>
</dbReference>
<dbReference type="RefSeq" id="WP_011702973.1">
    <property type="nucleotide sequence ID" value="NC_008555.1"/>
</dbReference>
<dbReference type="SMR" id="A0AKV8"/>
<dbReference type="STRING" id="386043.lwe2222"/>
<dbReference type="GeneID" id="61190125"/>
<dbReference type="KEGG" id="lwe:lwe2222"/>
<dbReference type="eggNOG" id="COG0588">
    <property type="taxonomic scope" value="Bacteria"/>
</dbReference>
<dbReference type="HOGENOM" id="CLU_033323_1_1_9"/>
<dbReference type="OrthoDB" id="9781415at2"/>
<dbReference type="UniPathway" id="UPA00109">
    <property type="reaction ID" value="UER00186"/>
</dbReference>
<dbReference type="Proteomes" id="UP000000779">
    <property type="component" value="Chromosome"/>
</dbReference>
<dbReference type="GO" id="GO:0004619">
    <property type="term" value="F:phosphoglycerate mutase activity"/>
    <property type="evidence" value="ECO:0007669"/>
    <property type="project" value="UniProtKB-EC"/>
</dbReference>
<dbReference type="GO" id="GO:0006094">
    <property type="term" value="P:gluconeogenesis"/>
    <property type="evidence" value="ECO:0007669"/>
    <property type="project" value="UniProtKB-UniRule"/>
</dbReference>
<dbReference type="GO" id="GO:0006096">
    <property type="term" value="P:glycolytic process"/>
    <property type="evidence" value="ECO:0007669"/>
    <property type="project" value="UniProtKB-UniRule"/>
</dbReference>
<dbReference type="CDD" id="cd07067">
    <property type="entry name" value="HP_PGM_like"/>
    <property type="match status" value="1"/>
</dbReference>
<dbReference type="FunFam" id="3.40.50.1240:FF:000003">
    <property type="entry name" value="2,3-bisphosphoglycerate-dependent phosphoglycerate mutase"/>
    <property type="match status" value="1"/>
</dbReference>
<dbReference type="Gene3D" id="3.40.50.1240">
    <property type="entry name" value="Phosphoglycerate mutase-like"/>
    <property type="match status" value="1"/>
</dbReference>
<dbReference type="HAMAP" id="MF_01039">
    <property type="entry name" value="PGAM_GpmA"/>
    <property type="match status" value="1"/>
</dbReference>
<dbReference type="InterPro" id="IPR013078">
    <property type="entry name" value="His_Pase_superF_clade-1"/>
</dbReference>
<dbReference type="InterPro" id="IPR029033">
    <property type="entry name" value="His_PPase_superfam"/>
</dbReference>
<dbReference type="InterPro" id="IPR001345">
    <property type="entry name" value="PG/BPGM_mutase_AS"/>
</dbReference>
<dbReference type="InterPro" id="IPR005952">
    <property type="entry name" value="Phosphogly_mut1"/>
</dbReference>
<dbReference type="NCBIfam" id="TIGR01258">
    <property type="entry name" value="pgm_1"/>
    <property type="match status" value="1"/>
</dbReference>
<dbReference type="NCBIfam" id="NF010713">
    <property type="entry name" value="PRK14115.1"/>
    <property type="match status" value="1"/>
</dbReference>
<dbReference type="PANTHER" id="PTHR11931">
    <property type="entry name" value="PHOSPHOGLYCERATE MUTASE"/>
    <property type="match status" value="1"/>
</dbReference>
<dbReference type="Pfam" id="PF00300">
    <property type="entry name" value="His_Phos_1"/>
    <property type="match status" value="2"/>
</dbReference>
<dbReference type="PIRSF" id="PIRSF000709">
    <property type="entry name" value="6PFK_2-Ptase"/>
    <property type="match status" value="1"/>
</dbReference>
<dbReference type="SMART" id="SM00855">
    <property type="entry name" value="PGAM"/>
    <property type="match status" value="1"/>
</dbReference>
<dbReference type="SUPFAM" id="SSF53254">
    <property type="entry name" value="Phosphoglycerate mutase-like"/>
    <property type="match status" value="1"/>
</dbReference>
<dbReference type="PROSITE" id="PS00175">
    <property type="entry name" value="PG_MUTASE"/>
    <property type="match status" value="1"/>
</dbReference>
<organism>
    <name type="scientific">Listeria welshimeri serovar 6b (strain ATCC 35897 / DSM 20650 / CCUG 15529 / CIP 8149 / NCTC 11857 / SLCC 5334 / V8)</name>
    <dbReference type="NCBI Taxonomy" id="386043"/>
    <lineage>
        <taxon>Bacteria</taxon>
        <taxon>Bacillati</taxon>
        <taxon>Bacillota</taxon>
        <taxon>Bacilli</taxon>
        <taxon>Bacillales</taxon>
        <taxon>Listeriaceae</taxon>
        <taxon>Listeria</taxon>
    </lineage>
</organism>